<organism>
    <name type="scientific">Saccharomyces cerevisiae (strain ATCC 204508 / S288c)</name>
    <name type="common">Baker's yeast</name>
    <dbReference type="NCBI Taxonomy" id="559292"/>
    <lineage>
        <taxon>Eukaryota</taxon>
        <taxon>Fungi</taxon>
        <taxon>Dikarya</taxon>
        <taxon>Ascomycota</taxon>
        <taxon>Saccharomycotina</taxon>
        <taxon>Saccharomycetes</taxon>
        <taxon>Saccharomycetales</taxon>
        <taxon>Saccharomycetaceae</taxon>
        <taxon>Saccharomyces</taxon>
    </lineage>
</organism>
<dbReference type="EMBL" id="L29340">
    <property type="protein sequence ID" value="AAA21840.1"/>
    <property type="molecule type" value="Genomic_DNA"/>
</dbReference>
<dbReference type="EMBL" id="L07116">
    <property type="status" value="NOT_ANNOTATED_CDS"/>
    <property type="molecule type" value="Genomic_DNA"/>
</dbReference>
<dbReference type="EMBL" id="U17243">
    <property type="protein sequence ID" value="AAB67338.1"/>
    <property type="molecule type" value="Genomic_DNA"/>
</dbReference>
<dbReference type="EMBL" id="AY558214">
    <property type="protein sequence ID" value="AAS56540.1"/>
    <property type="molecule type" value="Genomic_DNA"/>
</dbReference>
<dbReference type="EMBL" id="L08690">
    <property type="status" value="NOT_ANNOTATED_CDS"/>
    <property type="molecule type" value="Genomic_DNA"/>
</dbReference>
<dbReference type="EMBL" id="BK006945">
    <property type="protein sequence ID" value="DAA09604.1"/>
    <property type="molecule type" value="Genomic_DNA"/>
</dbReference>
<dbReference type="PIR" id="S50377">
    <property type="entry name" value="A53835"/>
</dbReference>
<dbReference type="RefSeq" id="NP_013395.1">
    <property type="nucleotide sequence ID" value="NM_001182180.1"/>
</dbReference>
<dbReference type="PDB" id="6N3Q">
    <property type="method" value="EM"/>
    <property type="resolution" value="3.68 A"/>
    <property type="chains" value="F=1-193"/>
</dbReference>
<dbReference type="PDB" id="6ND1">
    <property type="method" value="EM"/>
    <property type="resolution" value="4.10 A"/>
    <property type="chains" value="F=1-193"/>
</dbReference>
<dbReference type="PDB" id="7AFT">
    <property type="method" value="EM"/>
    <property type="resolution" value="4.40 A"/>
    <property type="chains" value="F=1-193"/>
</dbReference>
<dbReference type="PDB" id="7KAH">
    <property type="method" value="EM"/>
    <property type="resolution" value="3.10 A"/>
    <property type="chains" value="F=1-193"/>
</dbReference>
<dbReference type="PDB" id="7KAI">
    <property type="method" value="EM"/>
    <property type="resolution" value="3.20 A"/>
    <property type="chains" value="F=1-193"/>
</dbReference>
<dbReference type="PDB" id="7KAJ">
    <property type="method" value="EM"/>
    <property type="resolution" value="3.10 A"/>
    <property type="chains" value="F=1-193"/>
</dbReference>
<dbReference type="PDB" id="7KAO">
    <property type="method" value="EM"/>
    <property type="resolution" value="4.00 A"/>
    <property type="chains" value="F=1-193"/>
</dbReference>
<dbReference type="PDB" id="7KAP">
    <property type="method" value="EM"/>
    <property type="resolution" value="4.10 A"/>
    <property type="chains" value="F=1-193"/>
</dbReference>
<dbReference type="PDB" id="7KAQ">
    <property type="method" value="EM"/>
    <property type="resolution" value="4.00 A"/>
    <property type="chains" value="F=1-193"/>
</dbReference>
<dbReference type="PDB" id="7KAR">
    <property type="method" value="EM"/>
    <property type="resolution" value="4.00 A"/>
    <property type="chains" value="F=1-193"/>
</dbReference>
<dbReference type="PDB" id="7KAS">
    <property type="method" value="EM"/>
    <property type="resolution" value="3.90 A"/>
    <property type="chains" value="F=1-193"/>
</dbReference>
<dbReference type="PDB" id="7KAT">
    <property type="method" value="EM"/>
    <property type="resolution" value="4.40 A"/>
    <property type="chains" value="F=1-193"/>
</dbReference>
<dbReference type="PDB" id="7KAU">
    <property type="method" value="EM"/>
    <property type="resolution" value="4.00 A"/>
    <property type="chains" value="F=1-193"/>
</dbReference>
<dbReference type="PDB" id="7KB5">
    <property type="method" value="EM"/>
    <property type="resolution" value="3.80 A"/>
    <property type="chains" value="F=1-193"/>
</dbReference>
<dbReference type="PDBsum" id="6N3Q"/>
<dbReference type="PDBsum" id="6ND1"/>
<dbReference type="PDBsum" id="7AFT"/>
<dbReference type="PDBsum" id="7KAH"/>
<dbReference type="PDBsum" id="7KAI"/>
<dbReference type="PDBsum" id="7KAJ"/>
<dbReference type="PDBsum" id="7KAO"/>
<dbReference type="PDBsum" id="7KAP"/>
<dbReference type="PDBsum" id="7KAQ"/>
<dbReference type="PDBsum" id="7KAR"/>
<dbReference type="PDBsum" id="7KAS"/>
<dbReference type="PDBsum" id="7KAT"/>
<dbReference type="PDBsum" id="7KAU"/>
<dbReference type="PDBsum" id="7KB5"/>
<dbReference type="EMDB" id="EMD-0336"/>
<dbReference type="EMDB" id="EMD-0440"/>
<dbReference type="EMDB" id="EMD-11774"/>
<dbReference type="EMDB" id="EMD-22770"/>
<dbReference type="EMDB" id="EMD-22771"/>
<dbReference type="EMDB" id="EMD-22772"/>
<dbReference type="EMDB" id="EMD-22778"/>
<dbReference type="EMDB" id="EMD-22779"/>
<dbReference type="EMDB" id="EMD-22780"/>
<dbReference type="EMDB" id="EMD-22781"/>
<dbReference type="EMDB" id="EMD-22782"/>
<dbReference type="EMDB" id="EMD-22783"/>
<dbReference type="EMDB" id="EMD-22784"/>
<dbReference type="EMDB" id="EMD-22787"/>
<dbReference type="EMDB" id="EMD-29608"/>
<dbReference type="EMDB" id="EMD-29609"/>
<dbReference type="EMDB" id="EMD-29610"/>
<dbReference type="EMDB" id="EMD-29611"/>
<dbReference type="EMDB" id="EMD-29612"/>
<dbReference type="EMDB" id="EMD-29613"/>
<dbReference type="EMDB" id="EMD-29614"/>
<dbReference type="EMDB" id="EMD-29616"/>
<dbReference type="EMDB" id="EMD-29617"/>
<dbReference type="EMDB" id="EMD-29635"/>
<dbReference type="SMR" id="P39742"/>
<dbReference type="BioGRID" id="31558">
    <property type="interactions" value="264"/>
</dbReference>
<dbReference type="ComplexPortal" id="CPX-3055">
    <property type="entry name" value="Translocon complex"/>
</dbReference>
<dbReference type="ComplexPortal" id="CPX-3056">
    <property type="entry name" value="SEC62-SEC63 complex"/>
</dbReference>
<dbReference type="DIP" id="DIP-2491N"/>
<dbReference type="FunCoup" id="P39742">
    <property type="interactions" value="103"/>
</dbReference>
<dbReference type="IntAct" id="P39742">
    <property type="interactions" value="9"/>
</dbReference>
<dbReference type="MINT" id="P39742"/>
<dbReference type="STRING" id="4932.YLR292C"/>
<dbReference type="TCDB" id="3.A.5.8.1">
    <property type="family name" value="the general secretory pathway (sec) family"/>
</dbReference>
<dbReference type="iPTMnet" id="P39742"/>
<dbReference type="PaxDb" id="4932-YLR292C"/>
<dbReference type="PeptideAtlas" id="P39742"/>
<dbReference type="EnsemblFungi" id="YLR292C_mRNA">
    <property type="protein sequence ID" value="YLR292C"/>
    <property type="gene ID" value="YLR292C"/>
</dbReference>
<dbReference type="GeneID" id="850999"/>
<dbReference type="KEGG" id="sce:YLR292C"/>
<dbReference type="AGR" id="SGD:S000004283"/>
<dbReference type="SGD" id="S000004283">
    <property type="gene designation" value="SEC72"/>
</dbReference>
<dbReference type="VEuPathDB" id="FungiDB:YLR292C"/>
<dbReference type="eggNOG" id="ENOG502RZEU">
    <property type="taxonomic scope" value="Eukaryota"/>
</dbReference>
<dbReference type="HOGENOM" id="CLU_111698_0_0_1"/>
<dbReference type="InParanoid" id="P39742"/>
<dbReference type="OMA" id="KMYTLAI"/>
<dbReference type="OrthoDB" id="433738at2759"/>
<dbReference type="BioCyc" id="YEAST:G3O-32387-MONOMER"/>
<dbReference type="BioGRID-ORCS" id="850999">
    <property type="hits" value="0 hits in 10 CRISPR screens"/>
</dbReference>
<dbReference type="PRO" id="PR:P39742"/>
<dbReference type="Proteomes" id="UP000002311">
    <property type="component" value="Chromosome XII"/>
</dbReference>
<dbReference type="RNAct" id="P39742">
    <property type="molecule type" value="protein"/>
</dbReference>
<dbReference type="GO" id="GO:0005783">
    <property type="term" value="C:endoplasmic reticulum"/>
    <property type="evidence" value="ECO:0007005"/>
    <property type="project" value="SGD"/>
</dbReference>
<dbReference type="GO" id="GO:0030867">
    <property type="term" value="C:rough endoplasmic reticulum membrane"/>
    <property type="evidence" value="ECO:0000303"/>
    <property type="project" value="ComplexPortal"/>
</dbReference>
<dbReference type="GO" id="GO:0031207">
    <property type="term" value="C:Sec62/Sec63 complex"/>
    <property type="evidence" value="ECO:0000353"/>
    <property type="project" value="ComplexPortal"/>
</dbReference>
<dbReference type="GO" id="GO:0071256">
    <property type="term" value="C:translocon complex"/>
    <property type="evidence" value="ECO:0000353"/>
    <property type="project" value="ComplexPortal"/>
</dbReference>
<dbReference type="GO" id="GO:0008320">
    <property type="term" value="F:protein transmembrane transporter activity"/>
    <property type="evidence" value="ECO:0000314"/>
    <property type="project" value="SGD"/>
</dbReference>
<dbReference type="GO" id="GO:0031204">
    <property type="term" value="P:post-translational protein targeting to membrane, translocation"/>
    <property type="evidence" value="ECO:0000314"/>
    <property type="project" value="ComplexPortal"/>
</dbReference>
<dbReference type="FunFam" id="1.25.40.10:FF:000655">
    <property type="entry name" value="Sec72p"/>
    <property type="match status" value="1"/>
</dbReference>
<dbReference type="Gene3D" id="1.25.40.10">
    <property type="entry name" value="Tetratricopeptide repeat domain"/>
    <property type="match status" value="1"/>
</dbReference>
<dbReference type="InterPro" id="IPR011990">
    <property type="entry name" value="TPR-like_helical_dom_sf"/>
</dbReference>
<dbReference type="InterPro" id="IPR019734">
    <property type="entry name" value="TPR_rpt"/>
</dbReference>
<dbReference type="SMART" id="SM00028">
    <property type="entry name" value="TPR"/>
    <property type="match status" value="2"/>
</dbReference>
<dbReference type="SUPFAM" id="SSF48452">
    <property type="entry name" value="TPR-like"/>
    <property type="match status" value="1"/>
</dbReference>
<accession>P39742</accession>
<accession>D6VYT8</accession>
<gene>
    <name type="primary">SEC72</name>
    <name type="synonym">SEC67</name>
    <name type="synonym">SIM2</name>
    <name type="ordered locus">YLR292C</name>
    <name type="ORF">L8003.18</name>
</gene>
<protein>
    <recommendedName>
        <fullName>Translocation protein SEC72</fullName>
    </recommendedName>
    <alternativeName>
        <fullName>Sec62/63 complex 23 kDa subunit</fullName>
        <shortName>p23</shortName>
    </alternativeName>
</protein>
<comment type="function">
    <text>Acts as a non-essential component of the Sec62/63 complex which is involved in SRP-independent post-translational translocation across the endoplasmic reticulum (ER) and functions together with the Sec61 complex and KAR2 in a channel-forming translocon complex. A cycle of assembly and disassembly of Sec62/63 complex from SEC61 may govern the activity of the translocon. SEC72 may be involved in signal peptide recognition for a defined subset of leader peptides, or may increase the efficiency of unusual or 'difficult' secretory precursors to the translocation pore, it may be that this protein binds charged leader peptides to the membrane until they engage the translocation apparatus.</text>
</comment>
<comment type="subunit">
    <text evidence="2 4">Component of the heterotetrameric Sec62/63complex composed of SEC62, SEC63, SEC71 and SEC72. The Sec62/63 complex associates with the Sec61 complex to form the Sec complex. May interact with protein YLR301W. Part of a complex consisting of KAR2, SEC63, SEC66 and SEC72.</text>
</comment>
<comment type="interaction">
    <interactant intactId="EBI-16651">
        <id>P39742</id>
    </interactant>
    <interactant intactId="EBI-16636">
        <id>P14906</id>
        <label>SEC63</label>
    </interactant>
    <organismsDiffer>false</organismsDiffer>
    <experiments>5</experiments>
</comment>
<comment type="interaction">
    <interactant intactId="EBI-16651">
        <id>P39742</id>
    </interactant>
    <interactant intactId="EBI-16647">
        <id>P33754</id>
        <label>SEC66</label>
    </interactant>
    <organismsDiffer>false</organismsDiffer>
    <experiments>6</experiments>
</comment>
<comment type="subcellular location">
    <subcellularLocation>
        <location evidence="5">Cytoplasm</location>
    </subcellularLocation>
</comment>
<comment type="miscellaneous">
    <text evidence="1">Present with 5290 molecules/cell in log phase SD medium.</text>
</comment>
<sequence length="193" mass="21607">MVTLEYNANSKLITASDAVVALSTETNIDQINVLTTSLIGETNPNFTPQPNEALSKMIKGLFESGMKNLQQKKLNEALKNVSLAIEMAQRKRAPWEAFAIQLPELHFMLRSKIDLCLILGKHLEALQDLDFLLGTGLIQPDVFVRKADCLLKLRQWEEARATCERGLALAPEDMKLRALLIETARNLAEYNGE</sequence>
<proteinExistence type="evidence at protein level"/>
<keyword id="KW-0002">3D-structure</keyword>
<keyword id="KW-0963">Cytoplasm</keyword>
<keyword id="KW-0903">Direct protein sequencing</keyword>
<keyword id="KW-0653">Protein transport</keyword>
<keyword id="KW-1185">Reference proteome</keyword>
<keyword id="KW-0813">Transport</keyword>
<evidence type="ECO:0000269" key="1">
    <source>
    </source>
</evidence>
<evidence type="ECO:0000269" key="2">
    <source>
    </source>
</evidence>
<evidence type="ECO:0000269" key="3">
    <source>
    </source>
</evidence>
<evidence type="ECO:0000269" key="4">
    <source>
    </source>
</evidence>
<evidence type="ECO:0000305" key="5"/>
<evidence type="ECO:0007829" key="6">
    <source>
        <dbReference type="PDB" id="7KAH"/>
    </source>
</evidence>
<evidence type="ECO:0007829" key="7">
    <source>
        <dbReference type="PDB" id="7KAJ"/>
    </source>
</evidence>
<reference key="1">
    <citation type="journal article" date="1994" name="J. Cell Biol.">
        <title>Sec72p contributes to the selective recognition of signal peptides by the secretory polypeptide translocation complex.</title>
        <authorList>
            <person name="Feldheim D."/>
            <person name="Schekman R."/>
        </authorList>
    </citation>
    <scope>NUCLEOTIDE SEQUENCE [GENOMIC DNA]</scope>
    <scope>PROTEIN SEQUENCE OF 2-15</scope>
    <source>
        <strain>YPH501</strain>
    </source>
</reference>
<reference key="2">
    <citation type="journal article" date="1993" name="Mol. Cell. Biol.">
        <title>Evidence that GCD6 and GCD7, translational regulators of GCN4, are subunits of the guanine nucleotide exchange factor for eIF-2 in Saccharomyces cerevisiae.</title>
        <authorList>
            <person name="Bushman J.L."/>
            <person name="Asuru A.I."/>
            <person name="Matts R.L."/>
            <person name="Hinnebusch A.G."/>
        </authorList>
    </citation>
    <scope>NUCLEOTIDE SEQUENCE [GENOMIC DNA]</scope>
</reference>
<reference key="3">
    <citation type="journal article" date="1997" name="Nature">
        <title>The nucleotide sequence of Saccharomyces cerevisiae chromosome XII.</title>
        <authorList>
            <person name="Johnston M."/>
            <person name="Hillier L.W."/>
            <person name="Riles L."/>
            <person name="Albermann K."/>
            <person name="Andre B."/>
            <person name="Ansorge W."/>
            <person name="Benes V."/>
            <person name="Brueckner M."/>
            <person name="Delius H."/>
            <person name="Dubois E."/>
            <person name="Duesterhoeft A."/>
            <person name="Entian K.-D."/>
            <person name="Floeth M."/>
            <person name="Goffeau A."/>
            <person name="Hebling U."/>
            <person name="Heumann K."/>
            <person name="Heuss-Neitzel D."/>
            <person name="Hilbert H."/>
            <person name="Hilger F."/>
            <person name="Kleine K."/>
            <person name="Koetter P."/>
            <person name="Louis E.J."/>
            <person name="Messenguy F."/>
            <person name="Mewes H.-W."/>
            <person name="Miosga T."/>
            <person name="Moestl D."/>
            <person name="Mueller-Auer S."/>
            <person name="Nentwich U."/>
            <person name="Obermaier B."/>
            <person name="Piravandi E."/>
            <person name="Pohl T.M."/>
            <person name="Portetelle D."/>
            <person name="Purnelle B."/>
            <person name="Rechmann S."/>
            <person name="Rieger M."/>
            <person name="Rinke M."/>
            <person name="Rose M."/>
            <person name="Scharfe M."/>
            <person name="Scherens B."/>
            <person name="Scholler P."/>
            <person name="Schwager C."/>
            <person name="Schwarz S."/>
            <person name="Underwood A.P."/>
            <person name="Urrestarazu L.A."/>
            <person name="Vandenbol M."/>
            <person name="Verhasselt P."/>
            <person name="Vierendeels F."/>
            <person name="Voet M."/>
            <person name="Volckaert G."/>
            <person name="Voss H."/>
            <person name="Wambutt R."/>
            <person name="Wedler E."/>
            <person name="Wedler H."/>
            <person name="Zimmermann F.K."/>
            <person name="Zollner A."/>
            <person name="Hani J."/>
            <person name="Hoheisel J.D."/>
        </authorList>
    </citation>
    <scope>NUCLEOTIDE SEQUENCE [LARGE SCALE GENOMIC DNA]</scope>
    <source>
        <strain>ATCC 204508 / S288c</strain>
    </source>
</reference>
<reference key="4">
    <citation type="journal article" date="2014" name="G3 (Bethesda)">
        <title>The reference genome sequence of Saccharomyces cerevisiae: Then and now.</title>
        <authorList>
            <person name="Engel S.R."/>
            <person name="Dietrich F.S."/>
            <person name="Fisk D.G."/>
            <person name="Binkley G."/>
            <person name="Balakrishnan R."/>
            <person name="Costanzo M.C."/>
            <person name="Dwight S.S."/>
            <person name="Hitz B.C."/>
            <person name="Karra K."/>
            <person name="Nash R.S."/>
            <person name="Weng S."/>
            <person name="Wong E.D."/>
            <person name="Lloyd P."/>
            <person name="Skrzypek M.S."/>
            <person name="Miyasato S.R."/>
            <person name="Simison M."/>
            <person name="Cherry J.M."/>
        </authorList>
    </citation>
    <scope>GENOME REANNOTATION</scope>
    <source>
        <strain>ATCC 204508 / S288c</strain>
    </source>
</reference>
<reference key="5">
    <citation type="journal article" date="2007" name="Genome Res.">
        <title>Approaching a complete repository of sequence-verified protein-encoding clones for Saccharomyces cerevisiae.</title>
        <authorList>
            <person name="Hu Y."/>
            <person name="Rolfs A."/>
            <person name="Bhullar B."/>
            <person name="Murthy T.V.S."/>
            <person name="Zhu C."/>
            <person name="Berger M.F."/>
            <person name="Camargo A.A."/>
            <person name="Kelley F."/>
            <person name="McCarron S."/>
            <person name="Jepson D."/>
            <person name="Richardson A."/>
            <person name="Raphael J."/>
            <person name="Moreira D."/>
            <person name="Taycher E."/>
            <person name="Zuo D."/>
            <person name="Mohr S."/>
            <person name="Kane M.F."/>
            <person name="Williamson J."/>
            <person name="Simpson A.J.G."/>
            <person name="Bulyk M.L."/>
            <person name="Harlow E."/>
            <person name="Marsischky G."/>
            <person name="Kolodner R.D."/>
            <person name="LaBaer J."/>
        </authorList>
    </citation>
    <scope>NUCLEOTIDE SEQUENCE [GENOMIC DNA]</scope>
    <source>
        <strain>ATCC 204508 / S288c</strain>
    </source>
</reference>
<reference key="6">
    <citation type="journal article" date="1993" name="Mol. Cell. Biol.">
        <title>GSP1 and GSP2, genetic suppressors of the prp20-1 mutant in Saccharomyces cerevisiae: GTP-binding proteins involved in the maintenance of nuclear organization.</title>
        <authorList>
            <person name="Belhumeur P."/>
            <person name="Lee A."/>
            <person name="Tam R."/>
            <person name="Dipaolo T."/>
            <person name="Fortin N."/>
            <person name="Clark M.W."/>
        </authorList>
    </citation>
    <scope>NUCLEOTIDE SEQUENCE [GENOMIC DNA] OF 1-98</scope>
</reference>
<reference key="7">
    <citation type="journal article" date="1993" name="J. Cell Biol.">
        <title>A Sec63p-BiP complex from yeast is required for protein translocation in a reconstituted proteoliposome.</title>
        <authorList>
            <person name="Brodsky J.L."/>
            <person name="Schekman R."/>
        </authorList>
    </citation>
    <scope>IDENTIFICATION IN A COMPLEX WITH KAR2; SEC63 AND SEC66</scope>
</reference>
<reference key="8">
    <citation type="journal article" date="1991" name="Nature">
        <title>Assembly of yeast Sec proteins involved in translocation into the endoplasmic reticulum into a membrane-bound multisubunit complex.</title>
        <authorList>
            <person name="Deshaies R.J."/>
            <person name="Sanders S.L."/>
            <person name="Feldheim D.A."/>
            <person name="Schekman R."/>
        </authorList>
    </citation>
    <scope>IDENTIFICATION IN THE SEC62/63 COMPLEX</scope>
</reference>
<reference key="9">
    <citation type="journal article" date="1995" name="Cell">
        <title>Posttranslational protein transport in yeast reconstituted with a purified complex of Sec proteins and Kar2p.</title>
        <authorList>
            <person name="Panzner S."/>
            <person name="Dreier L."/>
            <person name="Hartmann E."/>
            <person name="Kostka S."/>
            <person name="Rapoport T.A."/>
        </authorList>
    </citation>
    <scope>ASSOCIATION OF THE SEC62/63 COMPLEX WITH THE SEC61 COMPLEX</scope>
</reference>
<reference key="10">
    <citation type="journal article" date="2003" name="Nature">
        <title>Global analysis of protein expression in yeast.</title>
        <authorList>
            <person name="Ghaemmaghami S."/>
            <person name="Huh W.-K."/>
            <person name="Bower K."/>
            <person name="Howson R.W."/>
            <person name="Belle A."/>
            <person name="Dephoure N."/>
            <person name="O'Shea E.K."/>
            <person name="Weissman J.S."/>
        </authorList>
    </citation>
    <scope>LEVEL OF PROTEIN EXPRESSION [LARGE SCALE ANALYSIS]</scope>
</reference>
<reference key="11">
    <citation type="journal article" date="2003" name="Yeast">
        <title>Identification of novel protein-protein interactions at the cytosolic surface of the Sec63 complex in the yeast ER membrane.</title>
        <authorList>
            <person name="Willer M."/>
            <person name="Jermy A.J."/>
            <person name="Young B.P."/>
            <person name="Stirling C.J."/>
        </authorList>
    </citation>
    <scope>INTERACTION WITH YLR301W</scope>
</reference>
<name>SEC72_YEAST</name>
<feature type="initiator methionine" description="Removed" evidence="3">
    <location>
        <position position="1"/>
    </location>
</feature>
<feature type="chain" id="PRO_0000097664" description="Translocation protein SEC72">
    <location>
        <begin position="2"/>
        <end position="193"/>
    </location>
</feature>
<feature type="sequence conflict" description="In Ref. 1; AAA21840." evidence="5" ref="1">
    <original>V</original>
    <variation>L</variation>
    <location>
        <position position="33"/>
    </location>
</feature>
<feature type="sequence conflict" description="In Ref. 1; AAA21840." evidence="5" ref="1">
    <original>L</original>
    <variation>M</variation>
    <location>
        <position position="187"/>
    </location>
</feature>
<feature type="strand" evidence="6">
    <location>
        <begin position="8"/>
        <end position="10"/>
    </location>
</feature>
<feature type="strand" evidence="7">
    <location>
        <begin position="17"/>
        <end position="19"/>
    </location>
</feature>
<feature type="helix" evidence="6">
    <location>
        <begin position="22"/>
        <end position="40"/>
    </location>
</feature>
<feature type="helix" evidence="6">
    <location>
        <begin position="53"/>
        <end position="70"/>
    </location>
</feature>
<feature type="helix" evidence="6">
    <location>
        <begin position="76"/>
        <end position="90"/>
    </location>
</feature>
<feature type="helix" evidence="6">
    <location>
        <begin position="98"/>
        <end position="119"/>
    </location>
</feature>
<feature type="helix" evidence="6">
    <location>
        <begin position="123"/>
        <end position="134"/>
    </location>
</feature>
<feature type="helix" evidence="6">
    <location>
        <begin position="140"/>
        <end position="152"/>
    </location>
</feature>
<feature type="helix" evidence="6">
    <location>
        <begin position="156"/>
        <end position="167"/>
    </location>
</feature>
<feature type="helix" evidence="6">
    <location>
        <begin position="175"/>
        <end position="191"/>
    </location>
</feature>